<sequence>MGTTASAAQQVPSTVPSSENVQGNGSGSSNVEDRNSLSTQSFQNVSIHNKAKSIITNKVAPVVITYNCKEEFQIHDDLLKANYSVGRISETMPEHYLVQGKYFMVHDVYSKLDVLNTTSSCGAPNFRQARGGYEVYGMGQPSLNGFKQVLQKLQSNGHKECVFFCVREEPVLFLKLEDDFVPYTPRRKENLHENLHDLEKGLRAENLELAIRKELHDFAQLSGNSYYVYNDIEHFKDEPHSIIIHCEEDIHVTEEVYNRPVFLLPAYRYHRLPLPMDGAPLETQFDAFVNILRENPSLLLLHDANHPPPALLFSCQTGVGRTNLAMILGTLVLYHRKGACEKQTISQDTNVLPKQRFQVIQNFINMVPNGEAIVDEVDKAIELCSEMHDIKAALYECKKKLEGIGEGYQIQGSSTKEYFLKGTLHSLERYFYLITFNYYLHEQYPLAFALSFSKWMCTQPWIYRLQASLNLSELTLSGELITKGTRVLVLDDRFSPDVLSTLKEMNVANFRRVPKMPVYGTAQPSLKATGSVLSYLTDAKRKYSNILWVNLREDVILEANEQIFTPREPDNLEQQIAVPAASPEQLEKLEATVANHVLTSQKWLEVYLEQEKQMKMFKTCRTMQEIFNQHRSAYPGLVYRRIPIPDFCAPREQDFDMLLQSMKSMLAEDSSAAFVFNCHGGKGRTTTAMVIAVLTLWHFNSIPEITEDEIVSVPDAKYTKGEFEVVMKIVQLLPDGHKIKKEVDMALDSISETMTPMHYHLREIIICTYRQVKTAKNSKEMRLLQLRSLQYLERYIYLILFNAYLHLEKKDTWQRPFSTWMYEVASKAGVYEVLNQLGFSEFENAEEQPLCRLRYRWQQQNTNLLPFRGEFI</sequence>
<name>PALD_XENTR</name>
<dbReference type="EMBL" id="CR855717">
    <property type="protein sequence ID" value="CAJ82510.1"/>
    <property type="molecule type" value="mRNA"/>
</dbReference>
<dbReference type="EMBL" id="BC075467">
    <property type="protein sequence ID" value="AAH75467.1"/>
    <property type="molecule type" value="mRNA"/>
</dbReference>
<dbReference type="RefSeq" id="NP_001006726.1">
    <property type="nucleotide sequence ID" value="NM_001006725.1"/>
</dbReference>
<dbReference type="FunCoup" id="Q6DIR8">
    <property type="interactions" value="619"/>
</dbReference>
<dbReference type="STRING" id="8364.ENSXETP00000015622"/>
<dbReference type="PaxDb" id="8364-ENSXETP00000051230"/>
<dbReference type="DNASU" id="448380"/>
<dbReference type="GeneID" id="448380"/>
<dbReference type="KEGG" id="xtr:448380"/>
<dbReference type="AGR" id="Xenbase:XB-GENE-5740535"/>
<dbReference type="CTD" id="27143"/>
<dbReference type="Xenbase" id="XB-GENE-5740535">
    <property type="gene designation" value="pald1"/>
</dbReference>
<dbReference type="eggNOG" id="ENOG502QQ90">
    <property type="taxonomic scope" value="Eukaryota"/>
</dbReference>
<dbReference type="InParanoid" id="Q6DIR8"/>
<dbReference type="OrthoDB" id="66369at2759"/>
<dbReference type="Proteomes" id="UP000008143">
    <property type="component" value="Chromosome 7"/>
</dbReference>
<dbReference type="GO" id="GO:0005829">
    <property type="term" value="C:cytosol"/>
    <property type="evidence" value="ECO:0007669"/>
    <property type="project" value="UniProtKB-SubCell"/>
</dbReference>
<dbReference type="CDD" id="cd17659">
    <property type="entry name" value="PTP_paladin_1"/>
    <property type="match status" value="1"/>
</dbReference>
<dbReference type="CDD" id="cd17660">
    <property type="entry name" value="PTP_paladin_2"/>
    <property type="match status" value="1"/>
</dbReference>
<dbReference type="FunFam" id="3.90.190.10:FF:000100">
    <property type="entry name" value="Phosphatase domain-containing paladin 1b"/>
    <property type="match status" value="1"/>
</dbReference>
<dbReference type="FunFam" id="3.90.190.10:FF:000067">
    <property type="entry name" value="Phosphatase domain-containing, paladin 1"/>
    <property type="match status" value="1"/>
</dbReference>
<dbReference type="Gene3D" id="3.90.190.10">
    <property type="entry name" value="Protein tyrosine phosphatase superfamily"/>
    <property type="match status" value="2"/>
</dbReference>
<dbReference type="InterPro" id="IPR029021">
    <property type="entry name" value="Prot-tyrosine_phosphatase-like"/>
</dbReference>
<dbReference type="InterPro" id="IPR050561">
    <property type="entry name" value="PTP"/>
</dbReference>
<dbReference type="PANTHER" id="PTHR23339">
    <property type="entry name" value="TYROSINE SPECIFIC PROTEIN PHOSPHATASE AND DUAL SPECIFICITY PROTEIN PHOSPHATASE"/>
    <property type="match status" value="1"/>
</dbReference>
<dbReference type="Pfam" id="PF14566">
    <property type="entry name" value="PTPlike_phytase"/>
    <property type="match status" value="2"/>
</dbReference>
<dbReference type="SMART" id="SM01301">
    <property type="entry name" value="PTPlike_phytase"/>
    <property type="match status" value="2"/>
</dbReference>
<dbReference type="SUPFAM" id="SSF52799">
    <property type="entry name" value="(Phosphotyrosine protein) phosphatases II"/>
    <property type="match status" value="2"/>
</dbReference>
<protein>
    <recommendedName>
        <fullName>Paladin</fullName>
    </recommendedName>
</protein>
<gene>
    <name type="primary">pald1</name>
    <name type="synonym">pald</name>
    <name type="ORF">TGas002h03.1</name>
</gene>
<accession>Q6DIR8</accession>
<reference key="1">
    <citation type="submission" date="2006-10" db="EMBL/GenBank/DDBJ databases">
        <authorList>
            <consortium name="Sanger Xenopus tropicalis EST/cDNA project"/>
        </authorList>
    </citation>
    <scope>NUCLEOTIDE SEQUENCE [LARGE SCALE MRNA]</scope>
    <source>
        <tissue>Gastrula</tissue>
    </source>
</reference>
<reference key="2">
    <citation type="submission" date="2004-06" db="EMBL/GenBank/DDBJ databases">
        <authorList>
            <consortium name="NIH - Xenopus Gene Collection (XGC) project"/>
        </authorList>
    </citation>
    <scope>NUCLEOTIDE SEQUENCE [LARGE SCALE MRNA]</scope>
    <source>
        <tissue>Embryo</tissue>
    </source>
</reference>
<evidence type="ECO:0000250" key="1"/>
<evidence type="ECO:0000255" key="2"/>
<evidence type="ECO:0000256" key="3">
    <source>
        <dbReference type="SAM" id="MobiDB-lite"/>
    </source>
</evidence>
<evidence type="ECO:0000305" key="4"/>
<comment type="subcellular location">
    <subcellularLocation>
        <location evidence="1">Cytoplasm</location>
        <location evidence="1">Cytosol</location>
    </subcellularLocation>
</comment>
<comment type="similarity">
    <text evidence="4">Belongs to the paladin family.</text>
</comment>
<feature type="initiator methionine" description="Removed" evidence="2">
    <location>
        <position position="1"/>
    </location>
</feature>
<feature type="chain" id="PRO_0000286134" description="Paladin">
    <location>
        <begin position="2"/>
        <end position="872"/>
    </location>
</feature>
<feature type="region of interest" description="Disordered" evidence="3">
    <location>
        <begin position="1"/>
        <end position="37"/>
    </location>
</feature>
<feature type="coiled-coil region" evidence="2">
    <location>
        <begin position="186"/>
        <end position="210"/>
    </location>
</feature>
<feature type="lipid moiety-binding region" description="N-myristoyl glycine" evidence="2">
    <location>
        <position position="2"/>
    </location>
</feature>
<organism>
    <name type="scientific">Xenopus tropicalis</name>
    <name type="common">Western clawed frog</name>
    <name type="synonym">Silurana tropicalis</name>
    <dbReference type="NCBI Taxonomy" id="8364"/>
    <lineage>
        <taxon>Eukaryota</taxon>
        <taxon>Metazoa</taxon>
        <taxon>Chordata</taxon>
        <taxon>Craniata</taxon>
        <taxon>Vertebrata</taxon>
        <taxon>Euteleostomi</taxon>
        <taxon>Amphibia</taxon>
        <taxon>Batrachia</taxon>
        <taxon>Anura</taxon>
        <taxon>Pipoidea</taxon>
        <taxon>Pipidae</taxon>
        <taxon>Xenopodinae</taxon>
        <taxon>Xenopus</taxon>
        <taxon>Silurana</taxon>
    </lineage>
</organism>
<keyword id="KW-0175">Coiled coil</keyword>
<keyword id="KW-0963">Cytoplasm</keyword>
<keyword id="KW-0449">Lipoprotein</keyword>
<keyword id="KW-0519">Myristate</keyword>
<keyword id="KW-1185">Reference proteome</keyword>
<proteinExistence type="evidence at transcript level"/>